<evidence type="ECO:0000255" key="1">
    <source>
        <dbReference type="HAMAP-Rule" id="MF_00016"/>
    </source>
</evidence>
<comment type="function">
    <text evidence="1">The RuvA-RuvB-RuvC complex processes Holliday junction (HJ) DNA during genetic recombination and DNA repair, while the RuvA-RuvB complex plays an important role in the rescue of blocked DNA replication forks via replication fork reversal (RFR). RuvA specifically binds to HJ cruciform DNA, conferring on it an open structure. The RuvB hexamer acts as an ATP-dependent pump, pulling dsDNA into and through the RuvAB complex. RuvB forms 2 homohexamers on either side of HJ DNA bound by 1 or 2 RuvA tetramers; 4 subunits per hexamer contact DNA at a time. Coordinated motions by a converter formed by DNA-disengaged RuvB subunits stimulates ATP hydrolysis and nucleotide exchange. Immobilization of the converter enables RuvB to convert the ATP-contained energy into a lever motion, pulling 2 nucleotides of DNA out of the RuvA tetramer per ATP hydrolyzed, thus driving DNA branch migration. The RuvB motors rotate together with the DNA substrate, which together with the progressing nucleotide cycle form the mechanistic basis for DNA recombination by continuous HJ branch migration. Branch migration allows RuvC to scan DNA until it finds its consensus sequence, where it cleaves and resolves cruciform DNA.</text>
</comment>
<comment type="catalytic activity">
    <reaction evidence="1">
        <text>ATP + H2O = ADP + phosphate + H(+)</text>
        <dbReference type="Rhea" id="RHEA:13065"/>
        <dbReference type="ChEBI" id="CHEBI:15377"/>
        <dbReference type="ChEBI" id="CHEBI:15378"/>
        <dbReference type="ChEBI" id="CHEBI:30616"/>
        <dbReference type="ChEBI" id="CHEBI:43474"/>
        <dbReference type="ChEBI" id="CHEBI:456216"/>
    </reaction>
</comment>
<comment type="subunit">
    <text evidence="1">Homohexamer. Forms an RuvA(8)-RuvB(12)-Holliday junction (HJ) complex. HJ DNA is sandwiched between 2 RuvA tetramers; dsDNA enters through RuvA and exits via RuvB. An RuvB hexamer assembles on each DNA strand where it exits the tetramer. Each RuvB hexamer is contacted by two RuvA subunits (via domain III) on 2 adjacent RuvB subunits; this complex drives branch migration. In the full resolvosome a probable DNA-RuvA(4)-RuvB(12)-RuvC(2) complex forms which resolves the HJ.</text>
</comment>
<comment type="subcellular location">
    <subcellularLocation>
        <location evidence="1">Cytoplasm</location>
    </subcellularLocation>
</comment>
<comment type="domain">
    <text evidence="1">Has 3 domains, the large (RuvB-L) and small ATPase (RuvB-S) domains and the C-terminal head (RuvB-H) domain. The head domain binds DNA, while the ATPase domains jointly bind ATP, ADP or are empty depending on the state of the subunit in the translocation cycle. During a single DNA translocation step the structure of each domain remains the same, but their relative positions change.</text>
</comment>
<comment type="similarity">
    <text evidence="1">Belongs to the RuvB family.</text>
</comment>
<name>RUVB_MYCGE</name>
<sequence length="307" mass="35000">MKLQIKPPNTFDEFVGKQEIISQIQLSIKASKLNKTQLDHILLYGPPGVGKTTLARLIANELKTKLQIIQGGHLQKPSDFLNAISLIKKGDVLFIDEIHAVAPNVMELMYPVMDVFKIQVLIGKDFNSKIVEMKVNPFTLIGATTQLGKIINPLEDRFGVILNINYYSNAEIEKMVSIYGKQMKLELNSNEISAITEHSKQTPRIAIRIVRRIFEQKIVNKKIDLEGLFKNLMIYKNGLQSIDVQYLEVLNRQNEPQGIKSISSMLGIDRHTIENKIEPFLLRENMIQKTKKGRIITNSGREYLVNF</sequence>
<accession>Q49425</accession>
<protein>
    <recommendedName>
        <fullName evidence="1">Holliday junction branch migration complex subunit RuvB</fullName>
        <ecNumber evidence="1">3.6.4.-</ecNumber>
    </recommendedName>
</protein>
<keyword id="KW-0067">ATP-binding</keyword>
<keyword id="KW-0963">Cytoplasm</keyword>
<keyword id="KW-0227">DNA damage</keyword>
<keyword id="KW-0233">DNA recombination</keyword>
<keyword id="KW-0234">DNA repair</keyword>
<keyword id="KW-0238">DNA-binding</keyword>
<keyword id="KW-0378">Hydrolase</keyword>
<keyword id="KW-0547">Nucleotide-binding</keyword>
<keyword id="KW-1185">Reference proteome</keyword>
<dbReference type="EC" id="3.6.4.-" evidence="1"/>
<dbReference type="EMBL" id="L43967">
    <property type="protein sequence ID" value="AAC71584.1"/>
    <property type="molecule type" value="Genomic_DNA"/>
</dbReference>
<dbReference type="PIR" id="G64239">
    <property type="entry name" value="G64239"/>
</dbReference>
<dbReference type="RefSeq" id="WP_009885816.1">
    <property type="nucleotide sequence ID" value="NC_000908.2"/>
</dbReference>
<dbReference type="SMR" id="Q49425"/>
<dbReference type="FunCoup" id="Q49425">
    <property type="interactions" value="127"/>
</dbReference>
<dbReference type="STRING" id="243273.MG_359"/>
<dbReference type="GeneID" id="88282542"/>
<dbReference type="KEGG" id="mge:MG_359"/>
<dbReference type="eggNOG" id="COG2255">
    <property type="taxonomic scope" value="Bacteria"/>
</dbReference>
<dbReference type="HOGENOM" id="CLU_055599_1_0_14"/>
<dbReference type="InParanoid" id="Q49425"/>
<dbReference type="OrthoDB" id="9804478at2"/>
<dbReference type="BioCyc" id="MGEN243273:G1GJ2-452-MONOMER"/>
<dbReference type="Proteomes" id="UP000000807">
    <property type="component" value="Chromosome"/>
</dbReference>
<dbReference type="GO" id="GO:0005737">
    <property type="term" value="C:cytoplasm"/>
    <property type="evidence" value="ECO:0007669"/>
    <property type="project" value="UniProtKB-SubCell"/>
</dbReference>
<dbReference type="GO" id="GO:0048476">
    <property type="term" value="C:Holliday junction resolvase complex"/>
    <property type="evidence" value="ECO:0007669"/>
    <property type="project" value="UniProtKB-UniRule"/>
</dbReference>
<dbReference type="GO" id="GO:0005524">
    <property type="term" value="F:ATP binding"/>
    <property type="evidence" value="ECO:0007669"/>
    <property type="project" value="UniProtKB-UniRule"/>
</dbReference>
<dbReference type="GO" id="GO:0016887">
    <property type="term" value="F:ATP hydrolysis activity"/>
    <property type="evidence" value="ECO:0007669"/>
    <property type="project" value="InterPro"/>
</dbReference>
<dbReference type="GO" id="GO:0000400">
    <property type="term" value="F:four-way junction DNA binding"/>
    <property type="evidence" value="ECO:0007669"/>
    <property type="project" value="UniProtKB-UniRule"/>
</dbReference>
<dbReference type="GO" id="GO:0009378">
    <property type="term" value="F:four-way junction helicase activity"/>
    <property type="evidence" value="ECO:0007669"/>
    <property type="project" value="InterPro"/>
</dbReference>
<dbReference type="GO" id="GO:0006310">
    <property type="term" value="P:DNA recombination"/>
    <property type="evidence" value="ECO:0007669"/>
    <property type="project" value="UniProtKB-UniRule"/>
</dbReference>
<dbReference type="GO" id="GO:0006281">
    <property type="term" value="P:DNA repair"/>
    <property type="evidence" value="ECO:0007669"/>
    <property type="project" value="UniProtKB-UniRule"/>
</dbReference>
<dbReference type="CDD" id="cd00009">
    <property type="entry name" value="AAA"/>
    <property type="match status" value="1"/>
</dbReference>
<dbReference type="Gene3D" id="1.10.8.60">
    <property type="match status" value="1"/>
</dbReference>
<dbReference type="Gene3D" id="3.40.50.300">
    <property type="entry name" value="P-loop containing nucleotide triphosphate hydrolases"/>
    <property type="match status" value="1"/>
</dbReference>
<dbReference type="Gene3D" id="1.10.10.10">
    <property type="entry name" value="Winged helix-like DNA-binding domain superfamily/Winged helix DNA-binding domain"/>
    <property type="match status" value="1"/>
</dbReference>
<dbReference type="HAMAP" id="MF_00016">
    <property type="entry name" value="DNA_HJ_migration_RuvB"/>
    <property type="match status" value="1"/>
</dbReference>
<dbReference type="InterPro" id="IPR003593">
    <property type="entry name" value="AAA+_ATPase"/>
</dbReference>
<dbReference type="InterPro" id="IPR004605">
    <property type="entry name" value="DNA_helicase_Holl-junc_RuvB"/>
</dbReference>
<dbReference type="InterPro" id="IPR027417">
    <property type="entry name" value="P-loop_NTPase"/>
</dbReference>
<dbReference type="InterPro" id="IPR008824">
    <property type="entry name" value="RuvB-like_N"/>
</dbReference>
<dbReference type="InterPro" id="IPR008823">
    <property type="entry name" value="RuvB_C"/>
</dbReference>
<dbReference type="InterPro" id="IPR036388">
    <property type="entry name" value="WH-like_DNA-bd_sf"/>
</dbReference>
<dbReference type="InterPro" id="IPR036390">
    <property type="entry name" value="WH_DNA-bd_sf"/>
</dbReference>
<dbReference type="NCBIfam" id="NF000868">
    <property type="entry name" value="PRK00080.1"/>
    <property type="match status" value="1"/>
</dbReference>
<dbReference type="NCBIfam" id="TIGR00635">
    <property type="entry name" value="ruvB"/>
    <property type="match status" value="1"/>
</dbReference>
<dbReference type="PANTHER" id="PTHR42848">
    <property type="match status" value="1"/>
</dbReference>
<dbReference type="PANTHER" id="PTHR42848:SF1">
    <property type="entry name" value="HOLLIDAY JUNCTION BRANCH MIGRATION COMPLEX SUBUNIT RUVB"/>
    <property type="match status" value="1"/>
</dbReference>
<dbReference type="Pfam" id="PF05491">
    <property type="entry name" value="RuvB_C"/>
    <property type="match status" value="1"/>
</dbReference>
<dbReference type="Pfam" id="PF05496">
    <property type="entry name" value="RuvB_N"/>
    <property type="match status" value="1"/>
</dbReference>
<dbReference type="SMART" id="SM00382">
    <property type="entry name" value="AAA"/>
    <property type="match status" value="1"/>
</dbReference>
<dbReference type="SUPFAM" id="SSF52540">
    <property type="entry name" value="P-loop containing nucleoside triphosphate hydrolases"/>
    <property type="match status" value="1"/>
</dbReference>
<dbReference type="SUPFAM" id="SSF46785">
    <property type="entry name" value="Winged helix' DNA-binding domain"/>
    <property type="match status" value="1"/>
</dbReference>
<proteinExistence type="inferred from homology"/>
<organism>
    <name type="scientific">Mycoplasma genitalium (strain ATCC 33530 / DSM 19775 / NCTC 10195 / G37)</name>
    <name type="common">Mycoplasmoides genitalium</name>
    <dbReference type="NCBI Taxonomy" id="243273"/>
    <lineage>
        <taxon>Bacteria</taxon>
        <taxon>Bacillati</taxon>
        <taxon>Mycoplasmatota</taxon>
        <taxon>Mycoplasmoidales</taxon>
        <taxon>Mycoplasmoidaceae</taxon>
        <taxon>Mycoplasmoides</taxon>
    </lineage>
</organism>
<feature type="chain" id="PRO_0000165556" description="Holliday junction branch migration complex subunit RuvB">
    <location>
        <begin position="1"/>
        <end position="307"/>
    </location>
</feature>
<feature type="region of interest" description="Large ATPase domain (RuvB-L)" evidence="1">
    <location>
        <begin position="1"/>
        <end position="167"/>
    </location>
</feature>
<feature type="region of interest" description="Small ATPAse domain (RuvB-S)" evidence="1">
    <location>
        <begin position="168"/>
        <end position="233"/>
    </location>
</feature>
<feature type="region of interest" description="Head domain (RuvB-H)" evidence="1">
    <location>
        <begin position="236"/>
        <end position="307"/>
    </location>
</feature>
<feature type="binding site" evidence="1">
    <location>
        <position position="5"/>
    </location>
    <ligand>
        <name>ATP</name>
        <dbReference type="ChEBI" id="CHEBI:30616"/>
    </ligand>
</feature>
<feature type="binding site" evidence="1">
    <location>
        <position position="48"/>
    </location>
    <ligand>
        <name>ATP</name>
        <dbReference type="ChEBI" id="CHEBI:30616"/>
    </ligand>
</feature>
<feature type="binding site" evidence="1">
    <location>
        <position position="51"/>
    </location>
    <ligand>
        <name>ATP</name>
        <dbReference type="ChEBI" id="CHEBI:30616"/>
    </ligand>
</feature>
<feature type="binding site" evidence="1">
    <location>
        <position position="52"/>
    </location>
    <ligand>
        <name>ATP</name>
        <dbReference type="ChEBI" id="CHEBI:30616"/>
    </ligand>
</feature>
<feature type="binding site" evidence="1">
    <location>
        <position position="52"/>
    </location>
    <ligand>
        <name>Mg(2+)</name>
        <dbReference type="ChEBI" id="CHEBI:18420"/>
    </ligand>
</feature>
<feature type="binding site" evidence="1">
    <location>
        <position position="53"/>
    </location>
    <ligand>
        <name>ATP</name>
        <dbReference type="ChEBI" id="CHEBI:30616"/>
    </ligand>
</feature>
<feature type="binding site" evidence="1">
    <location>
        <position position="157"/>
    </location>
    <ligand>
        <name>ATP</name>
        <dbReference type="ChEBI" id="CHEBI:30616"/>
    </ligand>
</feature>
<feature type="binding site" evidence="1">
    <location>
        <position position="167"/>
    </location>
    <ligand>
        <name>ATP</name>
        <dbReference type="ChEBI" id="CHEBI:30616"/>
    </ligand>
</feature>
<feature type="binding site" evidence="1">
    <location>
        <position position="204"/>
    </location>
    <ligand>
        <name>ATP</name>
        <dbReference type="ChEBI" id="CHEBI:30616"/>
    </ligand>
</feature>
<feature type="binding site" evidence="1">
    <location>
        <position position="270"/>
    </location>
    <ligand>
        <name>DNA</name>
        <dbReference type="ChEBI" id="CHEBI:16991"/>
    </ligand>
</feature>
<feature type="binding site" evidence="1">
    <location>
        <position position="289"/>
    </location>
    <ligand>
        <name>DNA</name>
        <dbReference type="ChEBI" id="CHEBI:16991"/>
    </ligand>
</feature>
<feature type="binding site" evidence="1">
    <location>
        <position position="294"/>
    </location>
    <ligand>
        <name>DNA</name>
        <dbReference type="ChEBI" id="CHEBI:16991"/>
    </ligand>
</feature>
<gene>
    <name evidence="1" type="primary">ruvB</name>
    <name type="ordered locus">MG359</name>
</gene>
<reference key="1">
    <citation type="journal article" date="1995" name="Science">
        <title>The minimal gene complement of Mycoplasma genitalium.</title>
        <authorList>
            <person name="Fraser C.M."/>
            <person name="Gocayne J.D."/>
            <person name="White O."/>
            <person name="Adams M.D."/>
            <person name="Clayton R.A."/>
            <person name="Fleischmann R.D."/>
            <person name="Bult C.J."/>
            <person name="Kerlavage A.R."/>
            <person name="Sutton G.G."/>
            <person name="Kelley J.M."/>
            <person name="Fritchman J.L."/>
            <person name="Weidman J.F."/>
            <person name="Small K.V."/>
            <person name="Sandusky M."/>
            <person name="Fuhrmann J.L."/>
            <person name="Nguyen D.T."/>
            <person name="Utterback T.R."/>
            <person name="Saudek D.M."/>
            <person name="Phillips C.A."/>
            <person name="Merrick J.M."/>
            <person name="Tomb J.-F."/>
            <person name="Dougherty B.A."/>
            <person name="Bott K.F."/>
            <person name="Hu P.-C."/>
            <person name="Lucier T.S."/>
            <person name="Peterson S.N."/>
            <person name="Smith H.O."/>
            <person name="Hutchison C.A. III"/>
            <person name="Venter J.C."/>
        </authorList>
    </citation>
    <scope>NUCLEOTIDE SEQUENCE [LARGE SCALE GENOMIC DNA]</scope>
    <source>
        <strain>ATCC 33530 / DSM 19775 / NCTC 10195 / G37</strain>
    </source>
</reference>